<evidence type="ECO:0000250" key="1">
    <source>
        <dbReference type="UniProtKB" id="Q86X83"/>
    </source>
</evidence>
<evidence type="ECO:0000255" key="2">
    <source>
        <dbReference type="PROSITE-ProRule" id="PRU00602"/>
    </source>
</evidence>
<evidence type="ECO:0000305" key="3"/>
<comment type="function">
    <text evidence="1">Scaffold protein in the commander complex that is essential for endosomal recycling of transmembrane cargos; the commander complex is composed of the CCC subcomplex and the retriever subcomplex (By similarity). May modulate activity of cullin-RING E3 ubiquitin ligase (CRL) complexes (By similarity). May down-regulate activation of NF-kappa-B (By similarity).</text>
</comment>
<comment type="subunit">
    <text evidence="1">Component of the commander complex consisting of the CCC subcomplex and the retriever subcomplex (By similarity). Component of the CCC (COMMD/CCDC22/CCDC93) subcomplex consisting of COMMD1, COMMD2, COMMD3, COMMD4, COMMD5, COMMD6, COMMD7, COMMD8, COMMD9, COMMD10, CCDC22 and CCDC93; within the complex forms a heterodimer with COMMD3 (By similarity). Interacts with RELA, RELB, NFKB1/p105, NFKB2/p100. Interacts with CCDC22, CCDC93, SCNN1B, CUL3, CUL4B, CUL5, CUL7 (By similarity).</text>
</comment>
<comment type="subcellular location">
    <subcellularLocation>
        <location evidence="1">Cytoplasm</location>
    </subcellularLocation>
</comment>
<comment type="similarity">
    <text evidence="3">Belongs to the COMM domain-containing protein 2 family.</text>
</comment>
<accession>Q8BXC6</accession>
<accession>Q8BJI3</accession>
<sequence>MLLDLSEEHKEHLAFLPQVDTAVVAEFGRIAVEFLRRGSNPKIYEGAARKLNVSSDTIQHGVEGLTYLLTESSKLMISELDFQDSVFVLGFSEELNKLLLQLYLDNRKEIRTILNELAPRLPSYHSLEWRLDVQLASRSLRQQIKPAVTIKLHLDQNGDHSTHFLQTDPATLLHLVQQLEQALEEMKTNHCRRVVRSIK</sequence>
<reference key="1">
    <citation type="journal article" date="2005" name="Science">
        <title>The transcriptional landscape of the mammalian genome.</title>
        <authorList>
            <person name="Carninci P."/>
            <person name="Kasukawa T."/>
            <person name="Katayama S."/>
            <person name="Gough J."/>
            <person name="Frith M.C."/>
            <person name="Maeda N."/>
            <person name="Oyama R."/>
            <person name="Ravasi T."/>
            <person name="Lenhard B."/>
            <person name="Wells C."/>
            <person name="Kodzius R."/>
            <person name="Shimokawa K."/>
            <person name="Bajic V.B."/>
            <person name="Brenner S.E."/>
            <person name="Batalov S."/>
            <person name="Forrest A.R."/>
            <person name="Zavolan M."/>
            <person name="Davis M.J."/>
            <person name="Wilming L.G."/>
            <person name="Aidinis V."/>
            <person name="Allen J.E."/>
            <person name="Ambesi-Impiombato A."/>
            <person name="Apweiler R."/>
            <person name="Aturaliya R.N."/>
            <person name="Bailey T.L."/>
            <person name="Bansal M."/>
            <person name="Baxter L."/>
            <person name="Beisel K.W."/>
            <person name="Bersano T."/>
            <person name="Bono H."/>
            <person name="Chalk A.M."/>
            <person name="Chiu K.P."/>
            <person name="Choudhary V."/>
            <person name="Christoffels A."/>
            <person name="Clutterbuck D.R."/>
            <person name="Crowe M.L."/>
            <person name="Dalla E."/>
            <person name="Dalrymple B.P."/>
            <person name="de Bono B."/>
            <person name="Della Gatta G."/>
            <person name="di Bernardo D."/>
            <person name="Down T."/>
            <person name="Engstrom P."/>
            <person name="Fagiolini M."/>
            <person name="Faulkner G."/>
            <person name="Fletcher C.F."/>
            <person name="Fukushima T."/>
            <person name="Furuno M."/>
            <person name="Futaki S."/>
            <person name="Gariboldi M."/>
            <person name="Georgii-Hemming P."/>
            <person name="Gingeras T.R."/>
            <person name="Gojobori T."/>
            <person name="Green R.E."/>
            <person name="Gustincich S."/>
            <person name="Harbers M."/>
            <person name="Hayashi Y."/>
            <person name="Hensch T.K."/>
            <person name="Hirokawa N."/>
            <person name="Hill D."/>
            <person name="Huminiecki L."/>
            <person name="Iacono M."/>
            <person name="Ikeo K."/>
            <person name="Iwama A."/>
            <person name="Ishikawa T."/>
            <person name="Jakt M."/>
            <person name="Kanapin A."/>
            <person name="Katoh M."/>
            <person name="Kawasawa Y."/>
            <person name="Kelso J."/>
            <person name="Kitamura H."/>
            <person name="Kitano H."/>
            <person name="Kollias G."/>
            <person name="Krishnan S.P."/>
            <person name="Kruger A."/>
            <person name="Kummerfeld S.K."/>
            <person name="Kurochkin I.V."/>
            <person name="Lareau L.F."/>
            <person name="Lazarevic D."/>
            <person name="Lipovich L."/>
            <person name="Liu J."/>
            <person name="Liuni S."/>
            <person name="McWilliam S."/>
            <person name="Madan Babu M."/>
            <person name="Madera M."/>
            <person name="Marchionni L."/>
            <person name="Matsuda H."/>
            <person name="Matsuzawa S."/>
            <person name="Miki H."/>
            <person name="Mignone F."/>
            <person name="Miyake S."/>
            <person name="Morris K."/>
            <person name="Mottagui-Tabar S."/>
            <person name="Mulder N."/>
            <person name="Nakano N."/>
            <person name="Nakauchi H."/>
            <person name="Ng P."/>
            <person name="Nilsson R."/>
            <person name="Nishiguchi S."/>
            <person name="Nishikawa S."/>
            <person name="Nori F."/>
            <person name="Ohara O."/>
            <person name="Okazaki Y."/>
            <person name="Orlando V."/>
            <person name="Pang K.C."/>
            <person name="Pavan W.J."/>
            <person name="Pavesi G."/>
            <person name="Pesole G."/>
            <person name="Petrovsky N."/>
            <person name="Piazza S."/>
            <person name="Reed J."/>
            <person name="Reid J.F."/>
            <person name="Ring B.Z."/>
            <person name="Ringwald M."/>
            <person name="Rost B."/>
            <person name="Ruan Y."/>
            <person name="Salzberg S.L."/>
            <person name="Sandelin A."/>
            <person name="Schneider C."/>
            <person name="Schoenbach C."/>
            <person name="Sekiguchi K."/>
            <person name="Semple C.A."/>
            <person name="Seno S."/>
            <person name="Sessa L."/>
            <person name="Sheng Y."/>
            <person name="Shibata Y."/>
            <person name="Shimada H."/>
            <person name="Shimada K."/>
            <person name="Silva D."/>
            <person name="Sinclair B."/>
            <person name="Sperling S."/>
            <person name="Stupka E."/>
            <person name="Sugiura K."/>
            <person name="Sultana R."/>
            <person name="Takenaka Y."/>
            <person name="Taki K."/>
            <person name="Tammoja K."/>
            <person name="Tan S.L."/>
            <person name="Tang S."/>
            <person name="Taylor M.S."/>
            <person name="Tegner J."/>
            <person name="Teichmann S.A."/>
            <person name="Ueda H.R."/>
            <person name="van Nimwegen E."/>
            <person name="Verardo R."/>
            <person name="Wei C.L."/>
            <person name="Yagi K."/>
            <person name="Yamanishi H."/>
            <person name="Zabarovsky E."/>
            <person name="Zhu S."/>
            <person name="Zimmer A."/>
            <person name="Hide W."/>
            <person name="Bult C."/>
            <person name="Grimmond S.M."/>
            <person name="Teasdale R.D."/>
            <person name="Liu E.T."/>
            <person name="Brusic V."/>
            <person name="Quackenbush J."/>
            <person name="Wahlestedt C."/>
            <person name="Mattick J.S."/>
            <person name="Hume D.A."/>
            <person name="Kai C."/>
            <person name="Sasaki D."/>
            <person name="Tomaru Y."/>
            <person name="Fukuda S."/>
            <person name="Kanamori-Katayama M."/>
            <person name="Suzuki M."/>
            <person name="Aoki J."/>
            <person name="Arakawa T."/>
            <person name="Iida J."/>
            <person name="Imamura K."/>
            <person name="Itoh M."/>
            <person name="Kato T."/>
            <person name="Kawaji H."/>
            <person name="Kawagashira N."/>
            <person name="Kawashima T."/>
            <person name="Kojima M."/>
            <person name="Kondo S."/>
            <person name="Konno H."/>
            <person name="Nakano K."/>
            <person name="Ninomiya N."/>
            <person name="Nishio T."/>
            <person name="Okada M."/>
            <person name="Plessy C."/>
            <person name="Shibata K."/>
            <person name="Shiraki T."/>
            <person name="Suzuki S."/>
            <person name="Tagami M."/>
            <person name="Waki K."/>
            <person name="Watahiki A."/>
            <person name="Okamura-Oho Y."/>
            <person name="Suzuki H."/>
            <person name="Kawai J."/>
            <person name="Hayashizaki Y."/>
        </authorList>
    </citation>
    <scope>NUCLEOTIDE SEQUENCE [LARGE SCALE MRNA]</scope>
    <source>
        <strain>C57BL/6J</strain>
        <tissue>Head</tissue>
        <tissue>Spinal ganglion</tissue>
    </source>
</reference>
<reference key="2">
    <citation type="submission" date="2009-01" db="UniProtKB">
        <authorList>
            <person name="Lubec G."/>
            <person name="Sunyer B."/>
            <person name="Chen W.-Q."/>
        </authorList>
    </citation>
    <scope>PROTEIN SEQUENCE OF 38-50</scope>
    <scope>IDENTIFICATION BY MASS SPECTROMETRY</scope>
    <source>
        <strain>OF1</strain>
        <tissue>Hippocampus</tissue>
    </source>
</reference>
<reference key="3">
    <citation type="journal article" date="2010" name="Cell">
        <title>A tissue-specific atlas of mouse protein phosphorylation and expression.</title>
        <authorList>
            <person name="Huttlin E.L."/>
            <person name="Jedrychowski M.P."/>
            <person name="Elias J.E."/>
            <person name="Goswami T."/>
            <person name="Rad R."/>
            <person name="Beausoleil S.A."/>
            <person name="Villen J."/>
            <person name="Haas W."/>
            <person name="Sowa M.E."/>
            <person name="Gygi S.P."/>
        </authorList>
    </citation>
    <scope>IDENTIFICATION BY MASS SPECTROMETRY [LARGE SCALE ANALYSIS]</scope>
    <source>
        <tissue>Brain</tissue>
        <tissue>Brown adipose tissue</tissue>
        <tissue>Heart</tissue>
        <tissue>Kidney</tissue>
        <tissue>Liver</tissue>
        <tissue>Lung</tissue>
        <tissue>Pancreas</tissue>
        <tissue>Spleen</tissue>
        <tissue>Testis</tissue>
    </source>
</reference>
<keyword id="KW-0963">Cytoplasm</keyword>
<keyword id="KW-0903">Direct protein sequencing</keyword>
<keyword id="KW-1185">Reference proteome</keyword>
<keyword id="KW-0804">Transcription</keyword>
<keyword id="KW-0805">Transcription regulation</keyword>
<keyword id="KW-0833">Ubl conjugation pathway</keyword>
<gene>
    <name type="primary">Commd2</name>
</gene>
<name>COMD2_MOUSE</name>
<dbReference type="EMBL" id="AK047941">
    <property type="protein sequence ID" value="BAC33194.1"/>
    <property type="molecule type" value="mRNA"/>
</dbReference>
<dbReference type="EMBL" id="AK083784">
    <property type="protein sequence ID" value="BAC39018.1"/>
    <property type="molecule type" value="mRNA"/>
</dbReference>
<dbReference type="CCDS" id="CCDS17362.1"/>
<dbReference type="RefSeq" id="NP_780304.2">
    <property type="nucleotide sequence ID" value="NM_175095.4"/>
</dbReference>
<dbReference type="SMR" id="Q8BXC6"/>
<dbReference type="BioGRID" id="206474">
    <property type="interactions" value="2"/>
</dbReference>
<dbReference type="FunCoup" id="Q8BXC6">
    <property type="interactions" value="360"/>
</dbReference>
<dbReference type="STRING" id="10090.ENSMUSP00000124819"/>
<dbReference type="GlyGen" id="Q8BXC6">
    <property type="glycosylation" value="1 site, 1 O-linked glycan (1 site)"/>
</dbReference>
<dbReference type="iPTMnet" id="Q8BXC6"/>
<dbReference type="PhosphoSitePlus" id="Q8BXC6"/>
<dbReference type="PaxDb" id="10090-ENSMUSP00000124819"/>
<dbReference type="ProteomicsDB" id="283346"/>
<dbReference type="Pumba" id="Q8BXC6"/>
<dbReference type="Antibodypedia" id="48056">
    <property type="antibodies" value="49 antibodies from 14 providers"/>
</dbReference>
<dbReference type="DNASU" id="52245"/>
<dbReference type="Ensembl" id="ENSMUST00000160959.8">
    <property type="protein sequence ID" value="ENSMUSP00000124819.2"/>
    <property type="gene ID" value="ENSMUSG00000036513.16"/>
</dbReference>
<dbReference type="GeneID" id="52245"/>
<dbReference type="KEGG" id="mmu:52245"/>
<dbReference type="UCSC" id="uc008phd.1">
    <property type="organism name" value="mouse"/>
</dbReference>
<dbReference type="AGR" id="MGI:1098806"/>
<dbReference type="CTD" id="51122"/>
<dbReference type="MGI" id="MGI:1098806">
    <property type="gene designation" value="Commd2"/>
</dbReference>
<dbReference type="VEuPathDB" id="HostDB:ENSMUSG00000036513"/>
<dbReference type="eggNOG" id="ENOG502QU0W">
    <property type="taxonomic scope" value="Eukaryota"/>
</dbReference>
<dbReference type="GeneTree" id="ENSGT00390000008489"/>
<dbReference type="HOGENOM" id="CLU_096212_1_0_1"/>
<dbReference type="InParanoid" id="Q8BXC6"/>
<dbReference type="OMA" id="NGDHNTQ"/>
<dbReference type="OrthoDB" id="10257479at2759"/>
<dbReference type="PhylomeDB" id="Q8BXC6"/>
<dbReference type="TreeFam" id="TF323519"/>
<dbReference type="Reactome" id="R-MMU-8951664">
    <property type="pathway name" value="Neddylation"/>
</dbReference>
<dbReference type="BioGRID-ORCS" id="52245">
    <property type="hits" value="9 hits in 76 CRISPR screens"/>
</dbReference>
<dbReference type="PRO" id="PR:Q8BXC6"/>
<dbReference type="Proteomes" id="UP000000589">
    <property type="component" value="Chromosome 3"/>
</dbReference>
<dbReference type="RNAct" id="Q8BXC6">
    <property type="molecule type" value="protein"/>
</dbReference>
<dbReference type="Bgee" id="ENSMUSG00000036513">
    <property type="expression patterns" value="Expressed in animal zygote and 263 other cell types or tissues"/>
</dbReference>
<dbReference type="ExpressionAtlas" id="Q8BXC6">
    <property type="expression patterns" value="baseline and differential"/>
</dbReference>
<dbReference type="GO" id="GO:0005737">
    <property type="term" value="C:cytoplasm"/>
    <property type="evidence" value="ECO:0007669"/>
    <property type="project" value="UniProtKB-SubCell"/>
</dbReference>
<dbReference type="CDD" id="cd04750">
    <property type="entry name" value="Commd2"/>
    <property type="match status" value="1"/>
</dbReference>
<dbReference type="InterPro" id="IPR017920">
    <property type="entry name" value="COMM"/>
</dbReference>
<dbReference type="InterPro" id="IPR037354">
    <property type="entry name" value="Commd2"/>
</dbReference>
<dbReference type="PANTHER" id="PTHR15857">
    <property type="entry name" value="COMM DOMAIN CONTAINING PROTEIN 2"/>
    <property type="match status" value="1"/>
</dbReference>
<dbReference type="PANTHER" id="PTHR15857:SF0">
    <property type="entry name" value="COMM DOMAIN-CONTAINING PROTEIN 2"/>
    <property type="match status" value="1"/>
</dbReference>
<dbReference type="Pfam" id="PF07258">
    <property type="entry name" value="COMM_domain"/>
    <property type="match status" value="1"/>
</dbReference>
<dbReference type="PROSITE" id="PS51269">
    <property type="entry name" value="COMM"/>
    <property type="match status" value="1"/>
</dbReference>
<feature type="chain" id="PRO_0000077387" description="COMM domain-containing protein 2">
    <location>
        <begin position="1"/>
        <end position="199"/>
    </location>
</feature>
<feature type="domain" description="COMM" evidence="2">
    <location>
        <begin position="123"/>
        <end position="190"/>
    </location>
</feature>
<feature type="sequence conflict" description="In Ref. 1; BAC39018." evidence="3" ref="1">
    <original>P</original>
    <variation>A</variation>
    <location>
        <position position="17"/>
    </location>
</feature>
<organism>
    <name type="scientific">Mus musculus</name>
    <name type="common">Mouse</name>
    <dbReference type="NCBI Taxonomy" id="10090"/>
    <lineage>
        <taxon>Eukaryota</taxon>
        <taxon>Metazoa</taxon>
        <taxon>Chordata</taxon>
        <taxon>Craniata</taxon>
        <taxon>Vertebrata</taxon>
        <taxon>Euteleostomi</taxon>
        <taxon>Mammalia</taxon>
        <taxon>Eutheria</taxon>
        <taxon>Euarchontoglires</taxon>
        <taxon>Glires</taxon>
        <taxon>Rodentia</taxon>
        <taxon>Myomorpha</taxon>
        <taxon>Muroidea</taxon>
        <taxon>Muridae</taxon>
        <taxon>Murinae</taxon>
        <taxon>Mus</taxon>
        <taxon>Mus</taxon>
    </lineage>
</organism>
<protein>
    <recommendedName>
        <fullName>COMM domain-containing protein 2</fullName>
    </recommendedName>
</protein>
<proteinExistence type="evidence at protein level"/>